<dbReference type="EMBL" id="CP000259">
    <property type="protein sequence ID" value="ABF32388.1"/>
    <property type="molecule type" value="Genomic_DNA"/>
</dbReference>
<dbReference type="RefSeq" id="WP_002989155.1">
    <property type="nucleotide sequence ID" value="NC_008021.1"/>
</dbReference>
<dbReference type="SMR" id="Q1JL31"/>
<dbReference type="KEGG" id="spk:MGAS9429_Spy1202"/>
<dbReference type="HOGENOM" id="CLU_002794_2_1_9"/>
<dbReference type="Proteomes" id="UP000002433">
    <property type="component" value="Chromosome"/>
</dbReference>
<dbReference type="GO" id="GO:0005829">
    <property type="term" value="C:cytosol"/>
    <property type="evidence" value="ECO:0007669"/>
    <property type="project" value="TreeGrafter"/>
</dbReference>
<dbReference type="GO" id="GO:0005525">
    <property type="term" value="F:GTP binding"/>
    <property type="evidence" value="ECO:0007669"/>
    <property type="project" value="UniProtKB-UniRule"/>
</dbReference>
<dbReference type="GO" id="GO:0003924">
    <property type="term" value="F:GTPase activity"/>
    <property type="evidence" value="ECO:0007669"/>
    <property type="project" value="InterPro"/>
</dbReference>
<dbReference type="GO" id="GO:0016150">
    <property type="term" value="F:translation release factor activity, codon nonspecific"/>
    <property type="evidence" value="ECO:0007669"/>
    <property type="project" value="TreeGrafter"/>
</dbReference>
<dbReference type="GO" id="GO:0016149">
    <property type="term" value="F:translation release factor activity, codon specific"/>
    <property type="evidence" value="ECO:0007669"/>
    <property type="project" value="UniProtKB-UniRule"/>
</dbReference>
<dbReference type="GO" id="GO:0006449">
    <property type="term" value="P:regulation of translational termination"/>
    <property type="evidence" value="ECO:0007669"/>
    <property type="project" value="UniProtKB-UniRule"/>
</dbReference>
<dbReference type="CDD" id="cd04169">
    <property type="entry name" value="RF3"/>
    <property type="match status" value="1"/>
</dbReference>
<dbReference type="CDD" id="cd16259">
    <property type="entry name" value="RF3_III"/>
    <property type="match status" value="1"/>
</dbReference>
<dbReference type="FunFam" id="2.40.30.10:FF:000040">
    <property type="entry name" value="Peptide chain release factor 3"/>
    <property type="match status" value="1"/>
</dbReference>
<dbReference type="FunFam" id="3.30.70.3280:FF:000001">
    <property type="entry name" value="Peptide chain release factor 3"/>
    <property type="match status" value="1"/>
</dbReference>
<dbReference type="FunFam" id="3.40.50.300:FF:000542">
    <property type="entry name" value="Peptide chain release factor 3"/>
    <property type="match status" value="1"/>
</dbReference>
<dbReference type="Gene3D" id="3.40.50.300">
    <property type="entry name" value="P-loop containing nucleotide triphosphate hydrolases"/>
    <property type="match status" value="1"/>
</dbReference>
<dbReference type="Gene3D" id="3.30.70.3280">
    <property type="entry name" value="Peptide chain release factor 3, domain III"/>
    <property type="match status" value="1"/>
</dbReference>
<dbReference type="Gene3D" id="2.40.30.10">
    <property type="entry name" value="Translation factors"/>
    <property type="match status" value="1"/>
</dbReference>
<dbReference type="HAMAP" id="MF_00072">
    <property type="entry name" value="Rel_fac_3"/>
    <property type="match status" value="1"/>
</dbReference>
<dbReference type="InterPro" id="IPR053905">
    <property type="entry name" value="EF-G-like_DII"/>
</dbReference>
<dbReference type="InterPro" id="IPR035647">
    <property type="entry name" value="EFG_III/V"/>
</dbReference>
<dbReference type="InterPro" id="IPR031157">
    <property type="entry name" value="G_TR_CS"/>
</dbReference>
<dbReference type="InterPro" id="IPR027417">
    <property type="entry name" value="P-loop_NTPase"/>
</dbReference>
<dbReference type="InterPro" id="IPR004548">
    <property type="entry name" value="PrfC"/>
</dbReference>
<dbReference type="InterPro" id="IPR032090">
    <property type="entry name" value="RF3_C"/>
</dbReference>
<dbReference type="InterPro" id="IPR038467">
    <property type="entry name" value="RF3_dom_3_sf"/>
</dbReference>
<dbReference type="InterPro" id="IPR041732">
    <property type="entry name" value="RF3_GTP-bd"/>
</dbReference>
<dbReference type="InterPro" id="IPR005225">
    <property type="entry name" value="Small_GTP-bd"/>
</dbReference>
<dbReference type="InterPro" id="IPR000795">
    <property type="entry name" value="T_Tr_GTP-bd_dom"/>
</dbReference>
<dbReference type="InterPro" id="IPR009000">
    <property type="entry name" value="Transl_B-barrel_sf"/>
</dbReference>
<dbReference type="NCBIfam" id="TIGR00503">
    <property type="entry name" value="prfC"/>
    <property type="match status" value="1"/>
</dbReference>
<dbReference type="NCBIfam" id="NF001964">
    <property type="entry name" value="PRK00741.1"/>
    <property type="match status" value="1"/>
</dbReference>
<dbReference type="NCBIfam" id="TIGR00231">
    <property type="entry name" value="small_GTP"/>
    <property type="match status" value="1"/>
</dbReference>
<dbReference type="PANTHER" id="PTHR43556">
    <property type="entry name" value="PEPTIDE CHAIN RELEASE FACTOR RF3"/>
    <property type="match status" value="1"/>
</dbReference>
<dbReference type="PANTHER" id="PTHR43556:SF2">
    <property type="entry name" value="PEPTIDE CHAIN RELEASE FACTOR RF3"/>
    <property type="match status" value="1"/>
</dbReference>
<dbReference type="Pfam" id="PF22042">
    <property type="entry name" value="EF-G_D2"/>
    <property type="match status" value="1"/>
</dbReference>
<dbReference type="Pfam" id="PF00009">
    <property type="entry name" value="GTP_EFTU"/>
    <property type="match status" value="1"/>
</dbReference>
<dbReference type="Pfam" id="PF16658">
    <property type="entry name" value="RF3_C"/>
    <property type="match status" value="1"/>
</dbReference>
<dbReference type="PRINTS" id="PR00315">
    <property type="entry name" value="ELONGATNFCT"/>
</dbReference>
<dbReference type="PRINTS" id="PR01037">
    <property type="entry name" value="TCRTETOQM"/>
</dbReference>
<dbReference type="SUPFAM" id="SSF54980">
    <property type="entry name" value="EF-G C-terminal domain-like"/>
    <property type="match status" value="1"/>
</dbReference>
<dbReference type="SUPFAM" id="SSF52540">
    <property type="entry name" value="P-loop containing nucleoside triphosphate hydrolases"/>
    <property type="match status" value="1"/>
</dbReference>
<dbReference type="SUPFAM" id="SSF50447">
    <property type="entry name" value="Translation proteins"/>
    <property type="match status" value="1"/>
</dbReference>
<dbReference type="PROSITE" id="PS00301">
    <property type="entry name" value="G_TR_1"/>
    <property type="match status" value="1"/>
</dbReference>
<dbReference type="PROSITE" id="PS51722">
    <property type="entry name" value="G_TR_2"/>
    <property type="match status" value="1"/>
</dbReference>
<gene>
    <name evidence="1" type="primary">prfC</name>
    <name type="ordered locus">MGAS9429_Spy1202</name>
</gene>
<sequence length="514" mass="58271">MSLTEEIKKRRTFAIISHPDAGKTTITEQLLYFGGEIREAGTVKGKKSGTFAKSDWMDIEKQRGISVTSSVMQFDYAGKRVNILDTPGHEDFSEDTYRTLMAVDAAVMVVDSAKGIEAQTKKLFEVVKHRNIPVFTFINKLDRDGREPLELLEELEEVLGIASYPMNWPIGMGRAFEGLYDLHNKRLELYKGDERFASIEDGDQLFANNPFYEQVKEDIELLQEAGNDFSEQAILDGDLTPVFFGSALTNFGVQTFLDTFLEFAPEPHGHKTTEGNVVDPLAKDFSGFVFKIQANMDPKHRDRIAFVRIVSGEFERGMGVNLTRTGKGAKLSNVTQFMAESRENVTNAVAGDIIGVYDTGTYQVGDTLTVGKNKFEFEPLPTFTPEIFMKVSPKNVMKQKSFHKGIEQLVQEGAIQLYKNYQTGEYMLGAVGQLQFEVFKHRMEGEYNAEVVMTPMGKKTVRWISEDDLDQRMSSSRNILAKDRFDQPVFLFENDFALRWFADKYPDVTLEEKM</sequence>
<organism>
    <name type="scientific">Streptococcus pyogenes serotype M12 (strain MGAS9429)</name>
    <dbReference type="NCBI Taxonomy" id="370551"/>
    <lineage>
        <taxon>Bacteria</taxon>
        <taxon>Bacillati</taxon>
        <taxon>Bacillota</taxon>
        <taxon>Bacilli</taxon>
        <taxon>Lactobacillales</taxon>
        <taxon>Streptococcaceae</taxon>
        <taxon>Streptococcus</taxon>
    </lineage>
</organism>
<keyword id="KW-0963">Cytoplasm</keyword>
<keyword id="KW-0342">GTP-binding</keyword>
<keyword id="KW-0547">Nucleotide-binding</keyword>
<keyword id="KW-0648">Protein biosynthesis</keyword>
<evidence type="ECO:0000255" key="1">
    <source>
        <dbReference type="HAMAP-Rule" id="MF_00072"/>
    </source>
</evidence>
<reference key="1">
    <citation type="journal article" date="2006" name="Proc. Natl. Acad. Sci. U.S.A.">
        <title>Molecular genetic anatomy of inter- and intraserotype variation in the human bacterial pathogen group A Streptococcus.</title>
        <authorList>
            <person name="Beres S.B."/>
            <person name="Richter E.W."/>
            <person name="Nagiec M.J."/>
            <person name="Sumby P."/>
            <person name="Porcella S.F."/>
            <person name="DeLeo F.R."/>
            <person name="Musser J.M."/>
        </authorList>
    </citation>
    <scope>NUCLEOTIDE SEQUENCE [LARGE SCALE GENOMIC DNA]</scope>
    <source>
        <strain>MGAS9429</strain>
    </source>
</reference>
<accession>Q1JL31</accession>
<comment type="function">
    <text evidence="1">Increases the formation of ribosomal termination complexes and stimulates activities of RF-1 and RF-2. It binds guanine nucleotides and has strong preference for UGA stop codons. It may interact directly with the ribosome. The stimulation of RF-1 and RF-2 is significantly reduced by GTP and GDP, but not by GMP.</text>
</comment>
<comment type="subcellular location">
    <subcellularLocation>
        <location evidence="1">Cytoplasm</location>
    </subcellularLocation>
</comment>
<comment type="similarity">
    <text evidence="1">Belongs to the TRAFAC class translation factor GTPase superfamily. Classic translation factor GTPase family. PrfC subfamily.</text>
</comment>
<name>RF3_STRPC</name>
<protein>
    <recommendedName>
        <fullName evidence="1">Peptide chain release factor 3</fullName>
        <shortName evidence="1">RF-3</shortName>
    </recommendedName>
</protein>
<feature type="chain" id="PRO_1000023686" description="Peptide chain release factor 3">
    <location>
        <begin position="1"/>
        <end position="514"/>
    </location>
</feature>
<feature type="domain" description="tr-type G">
    <location>
        <begin position="8"/>
        <end position="268"/>
    </location>
</feature>
<feature type="binding site" evidence="1">
    <location>
        <begin position="17"/>
        <end position="24"/>
    </location>
    <ligand>
        <name>GTP</name>
        <dbReference type="ChEBI" id="CHEBI:37565"/>
    </ligand>
</feature>
<feature type="binding site" evidence="1">
    <location>
        <begin position="85"/>
        <end position="89"/>
    </location>
    <ligand>
        <name>GTP</name>
        <dbReference type="ChEBI" id="CHEBI:37565"/>
    </ligand>
</feature>
<feature type="binding site" evidence="1">
    <location>
        <begin position="139"/>
        <end position="142"/>
    </location>
    <ligand>
        <name>GTP</name>
        <dbReference type="ChEBI" id="CHEBI:37565"/>
    </ligand>
</feature>
<proteinExistence type="inferred from homology"/>